<evidence type="ECO:0000255" key="1">
    <source>
        <dbReference type="HAMAP-Rule" id="MF_01331"/>
    </source>
</evidence>
<evidence type="ECO:0000305" key="2"/>
<dbReference type="EMBL" id="CP000473">
    <property type="protein sequence ID" value="ABJ86068.1"/>
    <property type="molecule type" value="Genomic_DNA"/>
</dbReference>
<dbReference type="SMR" id="Q01W97"/>
<dbReference type="FunCoup" id="Q01W97">
    <property type="interactions" value="615"/>
</dbReference>
<dbReference type="STRING" id="234267.Acid_5113"/>
<dbReference type="KEGG" id="sus:Acid_5113"/>
<dbReference type="eggNOG" id="COG0091">
    <property type="taxonomic scope" value="Bacteria"/>
</dbReference>
<dbReference type="HOGENOM" id="CLU_083987_3_3_0"/>
<dbReference type="InParanoid" id="Q01W97"/>
<dbReference type="OrthoDB" id="9805969at2"/>
<dbReference type="GO" id="GO:0022625">
    <property type="term" value="C:cytosolic large ribosomal subunit"/>
    <property type="evidence" value="ECO:0007669"/>
    <property type="project" value="TreeGrafter"/>
</dbReference>
<dbReference type="GO" id="GO:0019843">
    <property type="term" value="F:rRNA binding"/>
    <property type="evidence" value="ECO:0007669"/>
    <property type="project" value="UniProtKB-UniRule"/>
</dbReference>
<dbReference type="GO" id="GO:0003735">
    <property type="term" value="F:structural constituent of ribosome"/>
    <property type="evidence" value="ECO:0007669"/>
    <property type="project" value="InterPro"/>
</dbReference>
<dbReference type="GO" id="GO:0006412">
    <property type="term" value="P:translation"/>
    <property type="evidence" value="ECO:0007669"/>
    <property type="project" value="UniProtKB-UniRule"/>
</dbReference>
<dbReference type="CDD" id="cd00336">
    <property type="entry name" value="Ribosomal_L22"/>
    <property type="match status" value="1"/>
</dbReference>
<dbReference type="Gene3D" id="3.90.470.10">
    <property type="entry name" value="Ribosomal protein L22/L17"/>
    <property type="match status" value="1"/>
</dbReference>
<dbReference type="HAMAP" id="MF_01331_B">
    <property type="entry name" value="Ribosomal_uL22_B"/>
    <property type="match status" value="1"/>
</dbReference>
<dbReference type="InterPro" id="IPR001063">
    <property type="entry name" value="Ribosomal_uL22"/>
</dbReference>
<dbReference type="InterPro" id="IPR005727">
    <property type="entry name" value="Ribosomal_uL22_bac/chlpt-type"/>
</dbReference>
<dbReference type="InterPro" id="IPR047867">
    <property type="entry name" value="Ribosomal_uL22_bac/org-type"/>
</dbReference>
<dbReference type="InterPro" id="IPR036394">
    <property type="entry name" value="Ribosomal_uL22_sf"/>
</dbReference>
<dbReference type="NCBIfam" id="TIGR01044">
    <property type="entry name" value="rplV_bact"/>
    <property type="match status" value="1"/>
</dbReference>
<dbReference type="PANTHER" id="PTHR13501">
    <property type="entry name" value="CHLOROPLAST 50S RIBOSOMAL PROTEIN L22-RELATED"/>
    <property type="match status" value="1"/>
</dbReference>
<dbReference type="PANTHER" id="PTHR13501:SF8">
    <property type="entry name" value="LARGE RIBOSOMAL SUBUNIT PROTEIN UL22M"/>
    <property type="match status" value="1"/>
</dbReference>
<dbReference type="Pfam" id="PF00237">
    <property type="entry name" value="Ribosomal_L22"/>
    <property type="match status" value="1"/>
</dbReference>
<dbReference type="SUPFAM" id="SSF54843">
    <property type="entry name" value="Ribosomal protein L22"/>
    <property type="match status" value="1"/>
</dbReference>
<organism>
    <name type="scientific">Solibacter usitatus (strain Ellin6076)</name>
    <dbReference type="NCBI Taxonomy" id="234267"/>
    <lineage>
        <taxon>Bacteria</taxon>
        <taxon>Pseudomonadati</taxon>
        <taxon>Acidobacteriota</taxon>
        <taxon>Terriglobia</taxon>
        <taxon>Bryobacterales</taxon>
        <taxon>Solibacteraceae</taxon>
        <taxon>Candidatus Solibacter</taxon>
    </lineage>
</organism>
<gene>
    <name evidence="1" type="primary">rplV</name>
    <name type="ordered locus">Acid_5113</name>
</gene>
<feature type="chain" id="PRO_1000052656" description="Large ribosomal subunit protein uL22">
    <location>
        <begin position="1"/>
        <end position="113"/>
    </location>
</feature>
<protein>
    <recommendedName>
        <fullName evidence="1">Large ribosomal subunit protein uL22</fullName>
    </recommendedName>
    <alternativeName>
        <fullName evidence="2">50S ribosomal protein L22</fullName>
    </alternativeName>
</protein>
<sequence>MQVKAEARYIRVSPQKARLVVDLIRGQQAGKALTTLRTTNKRIAPTVEKVLQSAIANATNRNENVDVDQLFVTEAYVNEGPRMKRVRPAPMGRAYRYQRRLAHIVIKVTEKEA</sequence>
<comment type="function">
    <text evidence="1">This protein binds specifically to 23S rRNA; its binding is stimulated by other ribosomal proteins, e.g. L4, L17, and L20. It is important during the early stages of 50S assembly. It makes multiple contacts with different domains of the 23S rRNA in the assembled 50S subunit and ribosome (By similarity).</text>
</comment>
<comment type="function">
    <text evidence="1">The globular domain of the protein is located near the polypeptide exit tunnel on the outside of the subunit, while an extended beta-hairpin is found that lines the wall of the exit tunnel in the center of the 70S ribosome.</text>
</comment>
<comment type="subunit">
    <text evidence="1">Part of the 50S ribosomal subunit.</text>
</comment>
<comment type="similarity">
    <text evidence="1">Belongs to the universal ribosomal protein uL22 family.</text>
</comment>
<accession>Q01W97</accession>
<proteinExistence type="inferred from homology"/>
<name>RL22_SOLUE</name>
<keyword id="KW-0687">Ribonucleoprotein</keyword>
<keyword id="KW-0689">Ribosomal protein</keyword>
<keyword id="KW-0694">RNA-binding</keyword>
<keyword id="KW-0699">rRNA-binding</keyword>
<reference key="1">
    <citation type="journal article" date="2009" name="Appl. Environ. Microbiol.">
        <title>Three genomes from the phylum Acidobacteria provide insight into the lifestyles of these microorganisms in soils.</title>
        <authorList>
            <person name="Ward N.L."/>
            <person name="Challacombe J.F."/>
            <person name="Janssen P.H."/>
            <person name="Henrissat B."/>
            <person name="Coutinho P.M."/>
            <person name="Wu M."/>
            <person name="Xie G."/>
            <person name="Haft D.H."/>
            <person name="Sait M."/>
            <person name="Badger J."/>
            <person name="Barabote R.D."/>
            <person name="Bradley B."/>
            <person name="Brettin T.S."/>
            <person name="Brinkac L.M."/>
            <person name="Bruce D."/>
            <person name="Creasy T."/>
            <person name="Daugherty S.C."/>
            <person name="Davidsen T.M."/>
            <person name="DeBoy R.T."/>
            <person name="Detter J.C."/>
            <person name="Dodson R.J."/>
            <person name="Durkin A.S."/>
            <person name="Ganapathy A."/>
            <person name="Gwinn-Giglio M."/>
            <person name="Han C.S."/>
            <person name="Khouri H."/>
            <person name="Kiss H."/>
            <person name="Kothari S.P."/>
            <person name="Madupu R."/>
            <person name="Nelson K.E."/>
            <person name="Nelson W.C."/>
            <person name="Paulsen I."/>
            <person name="Penn K."/>
            <person name="Ren Q."/>
            <person name="Rosovitz M.J."/>
            <person name="Selengut J.D."/>
            <person name="Shrivastava S."/>
            <person name="Sullivan S.A."/>
            <person name="Tapia R."/>
            <person name="Thompson L.S."/>
            <person name="Watkins K.L."/>
            <person name="Yang Q."/>
            <person name="Yu C."/>
            <person name="Zafar N."/>
            <person name="Zhou L."/>
            <person name="Kuske C.R."/>
        </authorList>
    </citation>
    <scope>NUCLEOTIDE SEQUENCE [LARGE SCALE GENOMIC DNA]</scope>
    <source>
        <strain>Ellin6076</strain>
    </source>
</reference>